<protein>
    <recommendedName>
        <fullName evidence="1">Large ribosomal subunit protein bL31</fullName>
    </recommendedName>
    <alternativeName>
        <fullName evidence="2">50S ribosomal protein L31</fullName>
    </alternativeName>
</protein>
<comment type="function">
    <text evidence="1">Binds the 23S rRNA.</text>
</comment>
<comment type="subunit">
    <text evidence="1">Part of the 50S ribosomal subunit.</text>
</comment>
<comment type="similarity">
    <text evidence="1">Belongs to the bacterial ribosomal protein bL31 family. Type A subfamily.</text>
</comment>
<feature type="chain" id="PRO_1000126678" description="Large ribosomal subunit protein bL31">
    <location>
        <begin position="1"/>
        <end position="74"/>
    </location>
</feature>
<sequence length="74" mass="8391">MKPEIHPDYHTIKVVMTDGTEYFTRSTYGAEGDTLNLDIDSKSHPAWTGGTQQILDRGGRVSRFQKKFSGFLKK</sequence>
<dbReference type="EMBL" id="CP001196">
    <property type="protein sequence ID" value="ACI94425.1"/>
    <property type="molecule type" value="Genomic_DNA"/>
</dbReference>
<dbReference type="EMBL" id="CP002826">
    <property type="protein sequence ID" value="AEI05518.1"/>
    <property type="molecule type" value="Genomic_DNA"/>
</dbReference>
<dbReference type="RefSeq" id="WP_012564451.1">
    <property type="nucleotide sequence ID" value="NC_015684.1"/>
</dbReference>
<dbReference type="SMR" id="B6JJ31"/>
<dbReference type="STRING" id="504832.OCA5_c07960"/>
<dbReference type="KEGG" id="oca:OCAR_7321"/>
<dbReference type="KEGG" id="ocg:OCA5_c07960"/>
<dbReference type="PATRIC" id="fig|504832.7.peg.842"/>
<dbReference type="eggNOG" id="COG0254">
    <property type="taxonomic scope" value="Bacteria"/>
</dbReference>
<dbReference type="HOGENOM" id="CLU_114306_3_2_5"/>
<dbReference type="OrthoDB" id="9803251at2"/>
<dbReference type="Proteomes" id="UP000007730">
    <property type="component" value="Chromosome"/>
</dbReference>
<dbReference type="GO" id="GO:1990904">
    <property type="term" value="C:ribonucleoprotein complex"/>
    <property type="evidence" value="ECO:0007669"/>
    <property type="project" value="UniProtKB-KW"/>
</dbReference>
<dbReference type="GO" id="GO:0005840">
    <property type="term" value="C:ribosome"/>
    <property type="evidence" value="ECO:0007669"/>
    <property type="project" value="UniProtKB-KW"/>
</dbReference>
<dbReference type="GO" id="GO:0019843">
    <property type="term" value="F:rRNA binding"/>
    <property type="evidence" value="ECO:0007669"/>
    <property type="project" value="UniProtKB-KW"/>
</dbReference>
<dbReference type="GO" id="GO:0003735">
    <property type="term" value="F:structural constituent of ribosome"/>
    <property type="evidence" value="ECO:0007669"/>
    <property type="project" value="InterPro"/>
</dbReference>
<dbReference type="GO" id="GO:0006412">
    <property type="term" value="P:translation"/>
    <property type="evidence" value="ECO:0007669"/>
    <property type="project" value="UniProtKB-UniRule"/>
</dbReference>
<dbReference type="Gene3D" id="4.10.830.30">
    <property type="entry name" value="Ribosomal protein L31"/>
    <property type="match status" value="1"/>
</dbReference>
<dbReference type="HAMAP" id="MF_00501">
    <property type="entry name" value="Ribosomal_bL31_1"/>
    <property type="match status" value="1"/>
</dbReference>
<dbReference type="InterPro" id="IPR034704">
    <property type="entry name" value="Ribosomal_bL28/bL31-like_sf"/>
</dbReference>
<dbReference type="InterPro" id="IPR002150">
    <property type="entry name" value="Ribosomal_bL31"/>
</dbReference>
<dbReference type="InterPro" id="IPR027491">
    <property type="entry name" value="Ribosomal_bL31_A"/>
</dbReference>
<dbReference type="InterPro" id="IPR042105">
    <property type="entry name" value="Ribosomal_bL31_sf"/>
</dbReference>
<dbReference type="NCBIfam" id="TIGR00105">
    <property type="entry name" value="L31"/>
    <property type="match status" value="1"/>
</dbReference>
<dbReference type="NCBIfam" id="NF001809">
    <property type="entry name" value="PRK00528.1"/>
    <property type="match status" value="1"/>
</dbReference>
<dbReference type="PANTHER" id="PTHR33280">
    <property type="entry name" value="50S RIBOSOMAL PROTEIN L31, CHLOROPLASTIC"/>
    <property type="match status" value="1"/>
</dbReference>
<dbReference type="PANTHER" id="PTHR33280:SF6">
    <property type="entry name" value="LARGE RIBOSOMAL SUBUNIT PROTEIN BL31A"/>
    <property type="match status" value="1"/>
</dbReference>
<dbReference type="Pfam" id="PF01197">
    <property type="entry name" value="Ribosomal_L31"/>
    <property type="match status" value="1"/>
</dbReference>
<dbReference type="PRINTS" id="PR01249">
    <property type="entry name" value="RIBOSOMALL31"/>
</dbReference>
<dbReference type="SUPFAM" id="SSF143800">
    <property type="entry name" value="L28p-like"/>
    <property type="match status" value="1"/>
</dbReference>
<dbReference type="PROSITE" id="PS01143">
    <property type="entry name" value="RIBOSOMAL_L31"/>
    <property type="match status" value="1"/>
</dbReference>
<gene>
    <name evidence="1" type="primary">rpmE</name>
    <name type="ordered locus">OCAR_7321</name>
    <name type="ordered locus">OCA5_c07960</name>
</gene>
<keyword id="KW-1185">Reference proteome</keyword>
<keyword id="KW-0687">Ribonucleoprotein</keyword>
<keyword id="KW-0689">Ribosomal protein</keyword>
<keyword id="KW-0694">RNA-binding</keyword>
<keyword id="KW-0699">rRNA-binding</keyword>
<name>RL31_AFIC5</name>
<accession>B6JJ31</accession>
<accession>F8BZ27</accession>
<evidence type="ECO:0000255" key="1">
    <source>
        <dbReference type="HAMAP-Rule" id="MF_00501"/>
    </source>
</evidence>
<evidence type="ECO:0000305" key="2"/>
<reference key="1">
    <citation type="journal article" date="2008" name="J. Bacteriol.">
        <title>Genome sequence of the chemolithoautotrophic bacterium Oligotropha carboxidovorans OM5T.</title>
        <authorList>
            <person name="Paul D."/>
            <person name="Bridges S."/>
            <person name="Burgess S.C."/>
            <person name="Dandass Y."/>
            <person name="Lawrence M.L."/>
        </authorList>
    </citation>
    <scope>NUCLEOTIDE SEQUENCE [LARGE SCALE GENOMIC DNA]</scope>
    <source>
        <strain>ATCC 49405 / DSM 1227 / KCTC 32145 / OM5</strain>
    </source>
</reference>
<reference key="2">
    <citation type="journal article" date="2011" name="J. Bacteriol.">
        <title>Complete genome sequences of the chemolithoautotrophic Oligotropha carboxidovorans strains OM4 and OM5.</title>
        <authorList>
            <person name="Volland S."/>
            <person name="Rachinger M."/>
            <person name="Strittmatter A."/>
            <person name="Daniel R."/>
            <person name="Gottschalk G."/>
            <person name="Meyer O."/>
        </authorList>
    </citation>
    <scope>NUCLEOTIDE SEQUENCE [LARGE SCALE GENOMIC DNA]</scope>
    <source>
        <strain>ATCC 49405 / DSM 1227 / KCTC 32145 / OM5</strain>
    </source>
</reference>
<organism>
    <name type="scientific">Afipia carboxidovorans (strain ATCC 49405 / DSM 1227 / KCTC 32145 / OM5)</name>
    <name type="common">Oligotropha carboxidovorans</name>
    <dbReference type="NCBI Taxonomy" id="504832"/>
    <lineage>
        <taxon>Bacteria</taxon>
        <taxon>Pseudomonadati</taxon>
        <taxon>Pseudomonadota</taxon>
        <taxon>Alphaproteobacteria</taxon>
        <taxon>Hyphomicrobiales</taxon>
        <taxon>Nitrobacteraceae</taxon>
        <taxon>Afipia</taxon>
    </lineage>
</organism>
<proteinExistence type="inferred from homology"/>